<proteinExistence type="inferred from homology"/>
<organism>
    <name type="scientific">Rhizobium meliloti (strain 1021)</name>
    <name type="common">Ensifer meliloti</name>
    <name type="synonym">Sinorhizobium meliloti</name>
    <dbReference type="NCBI Taxonomy" id="266834"/>
    <lineage>
        <taxon>Bacteria</taxon>
        <taxon>Pseudomonadati</taxon>
        <taxon>Pseudomonadota</taxon>
        <taxon>Alphaproteobacteria</taxon>
        <taxon>Hyphomicrobiales</taxon>
        <taxon>Rhizobiaceae</taxon>
        <taxon>Sinorhizobium/Ensifer group</taxon>
        <taxon>Sinorhizobium</taxon>
    </lineage>
</organism>
<protein>
    <recommendedName>
        <fullName>Protein-glutamate methylesterase/protein-glutamine glutaminase of group 3 operon</fullName>
        <ecNumber evidence="1">3.1.1.61</ecNumber>
        <ecNumber evidence="1">3.5.1.44</ecNumber>
    </recommendedName>
</protein>
<dbReference type="EC" id="3.1.1.61" evidence="1"/>
<dbReference type="EC" id="3.5.1.44" evidence="1"/>
<dbReference type="EMBL" id="AE006469">
    <property type="protein sequence ID" value="AAK65507.1"/>
    <property type="molecule type" value="Genomic_DNA"/>
</dbReference>
<dbReference type="PIR" id="A95368">
    <property type="entry name" value="A95368"/>
</dbReference>
<dbReference type="RefSeq" id="NP_436095.1">
    <property type="nucleotide sequence ID" value="NC_003037.1"/>
</dbReference>
<dbReference type="RefSeq" id="WP_010967816.1">
    <property type="nucleotide sequence ID" value="NC_003037.1"/>
</dbReference>
<dbReference type="SMR" id="Q92YM4"/>
<dbReference type="EnsemblBacteria" id="AAK65507">
    <property type="protein sequence ID" value="AAK65507"/>
    <property type="gene ID" value="SMa1561"/>
</dbReference>
<dbReference type="KEGG" id="sme:SMa1561"/>
<dbReference type="PATRIC" id="fig|266834.11.peg.883"/>
<dbReference type="HOGENOM" id="CLU_000445_51_0_5"/>
<dbReference type="OrthoDB" id="9793421at2"/>
<dbReference type="Proteomes" id="UP000001976">
    <property type="component" value="Plasmid pSymA"/>
</dbReference>
<dbReference type="GO" id="GO:0005737">
    <property type="term" value="C:cytoplasm"/>
    <property type="evidence" value="ECO:0007669"/>
    <property type="project" value="UniProtKB-SubCell"/>
</dbReference>
<dbReference type="GO" id="GO:0000156">
    <property type="term" value="F:phosphorelay response regulator activity"/>
    <property type="evidence" value="ECO:0007669"/>
    <property type="project" value="InterPro"/>
</dbReference>
<dbReference type="GO" id="GO:0008984">
    <property type="term" value="F:protein-glutamate methylesterase activity"/>
    <property type="evidence" value="ECO:0007669"/>
    <property type="project" value="UniProtKB-UniRule"/>
</dbReference>
<dbReference type="GO" id="GO:0050568">
    <property type="term" value="F:protein-glutamine glutaminase activity"/>
    <property type="evidence" value="ECO:0007669"/>
    <property type="project" value="UniProtKB-UniRule"/>
</dbReference>
<dbReference type="GO" id="GO:0006935">
    <property type="term" value="P:chemotaxis"/>
    <property type="evidence" value="ECO:0007669"/>
    <property type="project" value="UniProtKB-UniRule"/>
</dbReference>
<dbReference type="CDD" id="cd16432">
    <property type="entry name" value="CheB_Rec"/>
    <property type="match status" value="1"/>
</dbReference>
<dbReference type="CDD" id="cd17541">
    <property type="entry name" value="REC_CheB-like"/>
    <property type="match status" value="1"/>
</dbReference>
<dbReference type="Gene3D" id="3.40.50.2300">
    <property type="match status" value="1"/>
</dbReference>
<dbReference type="Gene3D" id="3.40.50.180">
    <property type="entry name" value="Methylesterase CheB, C-terminal domain"/>
    <property type="match status" value="1"/>
</dbReference>
<dbReference type="HAMAP" id="MF_00099">
    <property type="entry name" value="CheB_chemtxs"/>
    <property type="match status" value="1"/>
</dbReference>
<dbReference type="InterPro" id="IPR008248">
    <property type="entry name" value="CheB-like"/>
</dbReference>
<dbReference type="InterPro" id="IPR035909">
    <property type="entry name" value="CheB_C"/>
</dbReference>
<dbReference type="InterPro" id="IPR011006">
    <property type="entry name" value="CheY-like_superfamily"/>
</dbReference>
<dbReference type="InterPro" id="IPR000673">
    <property type="entry name" value="Sig_transdc_resp-reg_Me-estase"/>
</dbReference>
<dbReference type="InterPro" id="IPR001789">
    <property type="entry name" value="Sig_transdc_resp-reg_receiver"/>
</dbReference>
<dbReference type="PANTHER" id="PTHR42872">
    <property type="entry name" value="PROTEIN-GLUTAMATE METHYLESTERASE/PROTEIN-GLUTAMINE GLUTAMINASE"/>
    <property type="match status" value="1"/>
</dbReference>
<dbReference type="PANTHER" id="PTHR42872:SF6">
    <property type="entry name" value="PROTEIN-GLUTAMATE METHYLESTERASE_PROTEIN-GLUTAMINE GLUTAMINASE"/>
    <property type="match status" value="1"/>
</dbReference>
<dbReference type="Pfam" id="PF01339">
    <property type="entry name" value="CheB_methylest"/>
    <property type="match status" value="1"/>
</dbReference>
<dbReference type="PIRSF" id="PIRSF000876">
    <property type="entry name" value="RR_chemtxs_CheB"/>
    <property type="match status" value="1"/>
</dbReference>
<dbReference type="SUPFAM" id="SSF52172">
    <property type="entry name" value="CheY-like"/>
    <property type="match status" value="1"/>
</dbReference>
<dbReference type="SUPFAM" id="SSF52738">
    <property type="entry name" value="Methylesterase CheB, C-terminal domain"/>
    <property type="match status" value="1"/>
</dbReference>
<dbReference type="PROSITE" id="PS50122">
    <property type="entry name" value="CHEB"/>
    <property type="match status" value="1"/>
</dbReference>
<dbReference type="PROSITE" id="PS50110">
    <property type="entry name" value="RESPONSE_REGULATORY"/>
    <property type="match status" value="1"/>
</dbReference>
<keyword id="KW-0145">Chemotaxis</keyword>
<keyword id="KW-0963">Cytoplasm</keyword>
<keyword id="KW-0378">Hydrolase</keyword>
<keyword id="KW-0614">Plasmid</keyword>
<keyword id="KW-1185">Reference proteome</keyword>
<evidence type="ECO:0000255" key="1">
    <source>
        <dbReference type="HAMAP-Rule" id="MF_00099"/>
    </source>
</evidence>
<comment type="function">
    <text evidence="1">Involved in chemotaxis. Part of a chemotaxis signal transduction system that modulates chemotaxis in response to various stimuli. Catalyzes the demethylation of specific methylglutamate residues introduced into the chemoreceptors (methyl-accepting chemotaxis proteins or MCP) by CheR. Also mediates the irreversible deamidation of specific glutamine residues to glutamic acid.</text>
</comment>
<comment type="catalytic activity">
    <reaction evidence="1">
        <text>[protein]-L-glutamate 5-O-methyl ester + H2O = L-glutamyl-[protein] + methanol + H(+)</text>
        <dbReference type="Rhea" id="RHEA:23236"/>
        <dbReference type="Rhea" id="RHEA-COMP:10208"/>
        <dbReference type="Rhea" id="RHEA-COMP:10311"/>
        <dbReference type="ChEBI" id="CHEBI:15377"/>
        <dbReference type="ChEBI" id="CHEBI:15378"/>
        <dbReference type="ChEBI" id="CHEBI:17790"/>
        <dbReference type="ChEBI" id="CHEBI:29973"/>
        <dbReference type="ChEBI" id="CHEBI:82795"/>
        <dbReference type="EC" id="3.1.1.61"/>
    </reaction>
</comment>
<comment type="catalytic activity">
    <reaction evidence="1">
        <text>L-glutaminyl-[protein] + H2O = L-glutamyl-[protein] + NH4(+)</text>
        <dbReference type="Rhea" id="RHEA:16441"/>
        <dbReference type="Rhea" id="RHEA-COMP:10207"/>
        <dbReference type="Rhea" id="RHEA-COMP:10208"/>
        <dbReference type="ChEBI" id="CHEBI:15377"/>
        <dbReference type="ChEBI" id="CHEBI:28938"/>
        <dbReference type="ChEBI" id="CHEBI:29973"/>
        <dbReference type="ChEBI" id="CHEBI:30011"/>
        <dbReference type="EC" id="3.5.1.44"/>
    </reaction>
</comment>
<comment type="subcellular location">
    <subcellularLocation>
        <location evidence="1">Cytoplasm</location>
    </subcellularLocation>
</comment>
<comment type="domain">
    <text evidence="1">Contains a C-terminal catalytic domain, and an N-terminal region which modulates catalytic activity.</text>
</comment>
<comment type="miscellaneous">
    <text>R.meliloti does not have a group 2 operon.</text>
</comment>
<comment type="similarity">
    <text evidence="1">Belongs to the CheB family.</text>
</comment>
<gene>
    <name evidence="1" type="primary">cheB3</name>
    <name type="ordered locus">RA0849</name>
    <name type="ORF">SMa1561</name>
</gene>
<geneLocation type="plasmid">
    <name>pSymA</name>
    <name>megaplasmid 1</name>
</geneLocation>
<feature type="chain" id="PRO_0000158020" description="Protein-glutamate methylesterase/protein-glutamine glutaminase of group 3 operon">
    <location>
        <begin position="1"/>
        <end position="354"/>
    </location>
</feature>
<feature type="domain" description="Response regulatory" evidence="1">
    <location>
        <begin position="3"/>
        <end position="121"/>
    </location>
</feature>
<feature type="domain" description="CheB-type methylesterase" evidence="1">
    <location>
        <begin position="158"/>
        <end position="340"/>
    </location>
</feature>
<feature type="active site" evidence="1">
    <location>
        <position position="167"/>
    </location>
</feature>
<feature type="active site" evidence="1">
    <location>
        <position position="194"/>
    </location>
</feature>
<feature type="active site" evidence="1">
    <location>
        <position position="287"/>
    </location>
</feature>
<reference key="1">
    <citation type="journal article" date="2001" name="Proc. Natl. Acad. Sci. U.S.A.">
        <title>Nucleotide sequence and predicted functions of the entire Sinorhizobium meliloti pSymA megaplasmid.</title>
        <authorList>
            <person name="Barnett M.J."/>
            <person name="Fisher R.F."/>
            <person name="Jones T."/>
            <person name="Komp C."/>
            <person name="Abola A.P."/>
            <person name="Barloy-Hubler F."/>
            <person name="Bowser L."/>
            <person name="Capela D."/>
            <person name="Galibert F."/>
            <person name="Gouzy J."/>
            <person name="Gurjal M."/>
            <person name="Hong A."/>
            <person name="Huizar L."/>
            <person name="Hyman R.W."/>
            <person name="Kahn D."/>
            <person name="Kahn M.L."/>
            <person name="Kalman S."/>
            <person name="Keating D.H."/>
            <person name="Palm C."/>
            <person name="Peck M.C."/>
            <person name="Surzycki R."/>
            <person name="Wells D.H."/>
            <person name="Yeh K.-C."/>
            <person name="Davis R.W."/>
            <person name="Federspiel N.A."/>
            <person name="Long S.R."/>
        </authorList>
    </citation>
    <scope>NUCLEOTIDE SEQUENCE [LARGE SCALE GENOMIC DNA]</scope>
    <source>
        <strain>1021</strain>
    </source>
</reference>
<reference key="2">
    <citation type="journal article" date="2001" name="Science">
        <title>The composite genome of the legume symbiont Sinorhizobium meliloti.</title>
        <authorList>
            <person name="Galibert F."/>
            <person name="Finan T.M."/>
            <person name="Long S.R."/>
            <person name="Puehler A."/>
            <person name="Abola P."/>
            <person name="Ampe F."/>
            <person name="Barloy-Hubler F."/>
            <person name="Barnett M.J."/>
            <person name="Becker A."/>
            <person name="Boistard P."/>
            <person name="Bothe G."/>
            <person name="Boutry M."/>
            <person name="Bowser L."/>
            <person name="Buhrmester J."/>
            <person name="Cadieu E."/>
            <person name="Capela D."/>
            <person name="Chain P."/>
            <person name="Cowie A."/>
            <person name="Davis R.W."/>
            <person name="Dreano S."/>
            <person name="Federspiel N.A."/>
            <person name="Fisher R.F."/>
            <person name="Gloux S."/>
            <person name="Godrie T."/>
            <person name="Goffeau A."/>
            <person name="Golding B."/>
            <person name="Gouzy J."/>
            <person name="Gurjal M."/>
            <person name="Hernandez-Lucas I."/>
            <person name="Hong A."/>
            <person name="Huizar L."/>
            <person name="Hyman R.W."/>
            <person name="Jones T."/>
            <person name="Kahn D."/>
            <person name="Kahn M.L."/>
            <person name="Kalman S."/>
            <person name="Keating D.H."/>
            <person name="Kiss E."/>
            <person name="Komp C."/>
            <person name="Lelaure V."/>
            <person name="Masuy D."/>
            <person name="Palm C."/>
            <person name="Peck M.C."/>
            <person name="Pohl T.M."/>
            <person name="Portetelle D."/>
            <person name="Purnelle B."/>
            <person name="Ramsperger U."/>
            <person name="Surzycki R."/>
            <person name="Thebault P."/>
            <person name="Vandenbol M."/>
            <person name="Vorhoelter F.J."/>
            <person name="Weidner S."/>
            <person name="Wells D.H."/>
            <person name="Wong K."/>
            <person name="Yeh K.-C."/>
            <person name="Batut J."/>
        </authorList>
    </citation>
    <scope>NUCLEOTIDE SEQUENCE [LARGE SCALE GENOMIC DNA]</scope>
    <source>
        <strain>1021</strain>
    </source>
</reference>
<name>CHEB3_RHIME</name>
<accession>Q92YM4</accession>
<sequence>MVRILLATSTVELEDLVKRAIEGDASAELVLIARSGREAVRMTGELLPDIVAVELCPSGDDSAETVREIMIAAPTPVVMLSHRDGSQLGTISARALEAGALAVIPAPAAHGMQLEQPAIEKFLSTIKAMSQVKVVRQWRQKVRGDRAAKDQPPTARTPIGIVGIAASTGGPAAIRAILKDISADLPVPILIVQHMSNGFIDGVAASLNATVPLTVKVARNGELLKPGTVYLAPDNCQLGVSGRSRLRVSDDAPVNGFKPSGSYLFGSIARAFKGESLAVVLTGMGDDGTEGLRALRMAGGKAIAQDEKSSVVFGMPKSAIGAGLVDLVLPLESIAENITAIARGRSEPEGETRT</sequence>